<name>PYRI_ECO7I</name>
<comment type="function">
    <text evidence="1">Involved in allosteric regulation of aspartate carbamoyltransferase.</text>
</comment>
<comment type="cofactor">
    <cofactor evidence="1">
        <name>Zn(2+)</name>
        <dbReference type="ChEBI" id="CHEBI:29105"/>
    </cofactor>
    <text evidence="1">Binds 1 zinc ion per subunit.</text>
</comment>
<comment type="subunit">
    <text evidence="1">Contains catalytic and regulatory chains.</text>
</comment>
<comment type="similarity">
    <text evidence="1">Belongs to the PyrI family.</text>
</comment>
<protein>
    <recommendedName>
        <fullName evidence="1">Aspartate carbamoyltransferase regulatory chain</fullName>
    </recommendedName>
</protein>
<evidence type="ECO:0000255" key="1">
    <source>
        <dbReference type="HAMAP-Rule" id="MF_00002"/>
    </source>
</evidence>
<feature type="chain" id="PRO_1000193111" description="Aspartate carbamoyltransferase regulatory chain">
    <location>
        <begin position="1"/>
        <end position="153"/>
    </location>
</feature>
<feature type="binding site" evidence="1">
    <location>
        <position position="109"/>
    </location>
    <ligand>
        <name>Zn(2+)</name>
        <dbReference type="ChEBI" id="CHEBI:29105"/>
    </ligand>
</feature>
<feature type="binding site" evidence="1">
    <location>
        <position position="114"/>
    </location>
    <ligand>
        <name>Zn(2+)</name>
        <dbReference type="ChEBI" id="CHEBI:29105"/>
    </ligand>
</feature>
<feature type="binding site" evidence="1">
    <location>
        <position position="138"/>
    </location>
    <ligand>
        <name>Zn(2+)</name>
        <dbReference type="ChEBI" id="CHEBI:29105"/>
    </ligand>
</feature>
<feature type="binding site" evidence="1">
    <location>
        <position position="141"/>
    </location>
    <ligand>
        <name>Zn(2+)</name>
        <dbReference type="ChEBI" id="CHEBI:29105"/>
    </ligand>
</feature>
<organism>
    <name type="scientific">Escherichia coli O7:K1 (strain IAI39 / ExPEC)</name>
    <dbReference type="NCBI Taxonomy" id="585057"/>
    <lineage>
        <taxon>Bacteria</taxon>
        <taxon>Pseudomonadati</taxon>
        <taxon>Pseudomonadota</taxon>
        <taxon>Gammaproteobacteria</taxon>
        <taxon>Enterobacterales</taxon>
        <taxon>Enterobacteriaceae</taxon>
        <taxon>Escherichia</taxon>
    </lineage>
</organism>
<gene>
    <name evidence="1" type="primary">pyrI</name>
    <name type="ordered locus">ECIAI39_4719</name>
</gene>
<dbReference type="EMBL" id="CU928164">
    <property type="protein sequence ID" value="CAR20816.1"/>
    <property type="molecule type" value="Genomic_DNA"/>
</dbReference>
<dbReference type="RefSeq" id="WP_000148583.1">
    <property type="nucleotide sequence ID" value="NC_011750.1"/>
</dbReference>
<dbReference type="RefSeq" id="YP_002410577.1">
    <property type="nucleotide sequence ID" value="NC_011750.1"/>
</dbReference>
<dbReference type="SMR" id="B7NUG0"/>
<dbReference type="STRING" id="585057.ECIAI39_4719"/>
<dbReference type="KEGG" id="ect:ECIAI39_4719"/>
<dbReference type="PATRIC" id="fig|585057.6.peg.4870"/>
<dbReference type="HOGENOM" id="CLU_128576_0_0_6"/>
<dbReference type="Proteomes" id="UP000000749">
    <property type="component" value="Chromosome"/>
</dbReference>
<dbReference type="GO" id="GO:0009347">
    <property type="term" value="C:aspartate carbamoyltransferase complex"/>
    <property type="evidence" value="ECO:0007669"/>
    <property type="project" value="InterPro"/>
</dbReference>
<dbReference type="GO" id="GO:0046872">
    <property type="term" value="F:metal ion binding"/>
    <property type="evidence" value="ECO:0007669"/>
    <property type="project" value="UniProtKB-KW"/>
</dbReference>
<dbReference type="GO" id="GO:0006207">
    <property type="term" value="P:'de novo' pyrimidine nucleobase biosynthetic process"/>
    <property type="evidence" value="ECO:0007669"/>
    <property type="project" value="InterPro"/>
</dbReference>
<dbReference type="GO" id="GO:0006221">
    <property type="term" value="P:pyrimidine nucleotide biosynthetic process"/>
    <property type="evidence" value="ECO:0007669"/>
    <property type="project" value="UniProtKB-UniRule"/>
</dbReference>
<dbReference type="FunFam" id="2.30.30.20:FF:000001">
    <property type="entry name" value="Aspartate carbamoyltransferase regulatory chain"/>
    <property type="match status" value="1"/>
</dbReference>
<dbReference type="FunFam" id="3.30.70.140:FF:000001">
    <property type="entry name" value="Aspartate carbamoyltransferase regulatory chain"/>
    <property type="match status" value="1"/>
</dbReference>
<dbReference type="Gene3D" id="2.30.30.20">
    <property type="entry name" value="Aspartate carbamoyltransferase regulatory subunit, C-terminal domain"/>
    <property type="match status" value="1"/>
</dbReference>
<dbReference type="Gene3D" id="3.30.70.140">
    <property type="entry name" value="Aspartate carbamoyltransferase regulatory subunit, N-terminal domain"/>
    <property type="match status" value="1"/>
</dbReference>
<dbReference type="HAMAP" id="MF_00002">
    <property type="entry name" value="Asp_carb_tr_reg"/>
    <property type="match status" value="1"/>
</dbReference>
<dbReference type="InterPro" id="IPR020545">
    <property type="entry name" value="Asp_carbamoyltransf_reg_N"/>
</dbReference>
<dbReference type="InterPro" id="IPR002801">
    <property type="entry name" value="Asp_carbamoylTrfase_reg"/>
</dbReference>
<dbReference type="InterPro" id="IPR020542">
    <property type="entry name" value="Asp_carbamoyltrfase_reg_C"/>
</dbReference>
<dbReference type="InterPro" id="IPR036792">
    <property type="entry name" value="Asp_carbatrfase_reg_C_sf"/>
</dbReference>
<dbReference type="InterPro" id="IPR036793">
    <property type="entry name" value="Asp_carbatrfase_reg_N_sf"/>
</dbReference>
<dbReference type="NCBIfam" id="TIGR00240">
    <property type="entry name" value="ATCase_reg"/>
    <property type="match status" value="1"/>
</dbReference>
<dbReference type="PANTHER" id="PTHR35805">
    <property type="entry name" value="ASPARTATE CARBAMOYLTRANSFERASE REGULATORY CHAIN"/>
    <property type="match status" value="1"/>
</dbReference>
<dbReference type="PANTHER" id="PTHR35805:SF1">
    <property type="entry name" value="ASPARTATE CARBAMOYLTRANSFERASE REGULATORY CHAIN"/>
    <property type="match status" value="1"/>
</dbReference>
<dbReference type="Pfam" id="PF01948">
    <property type="entry name" value="PyrI"/>
    <property type="match status" value="1"/>
</dbReference>
<dbReference type="Pfam" id="PF02748">
    <property type="entry name" value="PyrI_C"/>
    <property type="match status" value="1"/>
</dbReference>
<dbReference type="SUPFAM" id="SSF57825">
    <property type="entry name" value="Aspartate carbamoyltransferase, Regulatory-chain, C-terminal domain"/>
    <property type="match status" value="1"/>
</dbReference>
<dbReference type="SUPFAM" id="SSF54893">
    <property type="entry name" value="Aspartate carbamoyltransferase, Regulatory-chain, N-terminal domain"/>
    <property type="match status" value="1"/>
</dbReference>
<keyword id="KW-0479">Metal-binding</keyword>
<keyword id="KW-0665">Pyrimidine biosynthesis</keyword>
<keyword id="KW-0862">Zinc</keyword>
<reference key="1">
    <citation type="journal article" date="2009" name="PLoS Genet.">
        <title>Organised genome dynamics in the Escherichia coli species results in highly diverse adaptive paths.</title>
        <authorList>
            <person name="Touchon M."/>
            <person name="Hoede C."/>
            <person name="Tenaillon O."/>
            <person name="Barbe V."/>
            <person name="Baeriswyl S."/>
            <person name="Bidet P."/>
            <person name="Bingen E."/>
            <person name="Bonacorsi S."/>
            <person name="Bouchier C."/>
            <person name="Bouvet O."/>
            <person name="Calteau A."/>
            <person name="Chiapello H."/>
            <person name="Clermont O."/>
            <person name="Cruveiller S."/>
            <person name="Danchin A."/>
            <person name="Diard M."/>
            <person name="Dossat C."/>
            <person name="Karoui M.E."/>
            <person name="Frapy E."/>
            <person name="Garry L."/>
            <person name="Ghigo J.M."/>
            <person name="Gilles A.M."/>
            <person name="Johnson J."/>
            <person name="Le Bouguenec C."/>
            <person name="Lescat M."/>
            <person name="Mangenot S."/>
            <person name="Martinez-Jehanne V."/>
            <person name="Matic I."/>
            <person name="Nassif X."/>
            <person name="Oztas S."/>
            <person name="Petit M.A."/>
            <person name="Pichon C."/>
            <person name="Rouy Z."/>
            <person name="Ruf C.S."/>
            <person name="Schneider D."/>
            <person name="Tourret J."/>
            <person name="Vacherie B."/>
            <person name="Vallenet D."/>
            <person name="Medigue C."/>
            <person name="Rocha E.P.C."/>
            <person name="Denamur E."/>
        </authorList>
    </citation>
    <scope>NUCLEOTIDE SEQUENCE [LARGE SCALE GENOMIC DNA]</scope>
    <source>
        <strain>IAI39 / ExPEC</strain>
    </source>
</reference>
<accession>B7NUG0</accession>
<sequence length="153" mass="17151">MTHDNKLQVEAIKRGTVIDHIPAQIGFKLLSLFKLTETDQRITIGLNLPSGEMGRKDLIKIENTFLSEDQVDQLALYAPQATVNRIDNYEVVGKSRPSLPERIDNVLVCPNSNCISHAEPVSSSFTVRKRANDIALKCKYCEKEFSHNVVLAN</sequence>
<proteinExistence type="inferred from homology"/>